<organism>
    <name type="scientific">Chlamydia trachomatis serovar L2 (strain ATCC VR-902B / DSM 19102 / 434/Bu)</name>
    <dbReference type="NCBI Taxonomy" id="471472"/>
    <lineage>
        <taxon>Bacteria</taxon>
        <taxon>Pseudomonadati</taxon>
        <taxon>Chlamydiota</taxon>
        <taxon>Chlamydiia</taxon>
        <taxon>Chlamydiales</taxon>
        <taxon>Chlamydiaceae</taxon>
        <taxon>Chlamydia/Chlamydophila group</taxon>
        <taxon>Chlamydia</taxon>
    </lineage>
</organism>
<gene>
    <name evidence="1" type="primary">dxs</name>
    <name type="ordered locus">CTL0585</name>
</gene>
<evidence type="ECO:0000255" key="1">
    <source>
        <dbReference type="HAMAP-Rule" id="MF_00315"/>
    </source>
</evidence>
<protein>
    <recommendedName>
        <fullName evidence="1">1-deoxy-D-xylulose-5-phosphate synthase</fullName>
        <ecNumber evidence="1">2.2.1.7</ecNumber>
    </recommendedName>
    <alternativeName>
        <fullName evidence="1">1-deoxyxylulose-5-phosphate synthase</fullName>
        <shortName evidence="1">DXP synthase</shortName>
        <shortName evidence="1">DXPS</shortName>
    </alternativeName>
</protein>
<reference key="1">
    <citation type="journal article" date="2008" name="Genome Res.">
        <title>Chlamydia trachomatis: genome sequence analysis of lymphogranuloma venereum isolates.</title>
        <authorList>
            <person name="Thomson N.R."/>
            <person name="Holden M.T.G."/>
            <person name="Carder C."/>
            <person name="Lennard N."/>
            <person name="Lockey S.J."/>
            <person name="Marsh P."/>
            <person name="Skipp P."/>
            <person name="O'Connor C.D."/>
            <person name="Goodhead I."/>
            <person name="Norbertzcak H."/>
            <person name="Harris B."/>
            <person name="Ormond D."/>
            <person name="Rance R."/>
            <person name="Quail M.A."/>
            <person name="Parkhill J."/>
            <person name="Stephens R.S."/>
            <person name="Clarke I.N."/>
        </authorList>
    </citation>
    <scope>NUCLEOTIDE SEQUENCE [LARGE SCALE GENOMIC DNA]</scope>
    <source>
        <strain>ATCC VR-902B / DSM 19102 / 434/Bu</strain>
    </source>
</reference>
<proteinExistence type="inferred from homology"/>
<accession>B0B7P9</accession>
<feature type="chain" id="PRO_1000115730" description="1-deoxy-D-xylulose-5-phosphate synthase">
    <location>
        <begin position="1"/>
        <end position="640"/>
    </location>
</feature>
<feature type="binding site" evidence="1">
    <location>
        <position position="75"/>
    </location>
    <ligand>
        <name>thiamine diphosphate</name>
        <dbReference type="ChEBI" id="CHEBI:58937"/>
    </ligand>
</feature>
<feature type="binding site" evidence="1">
    <location>
        <begin position="117"/>
        <end position="119"/>
    </location>
    <ligand>
        <name>thiamine diphosphate</name>
        <dbReference type="ChEBI" id="CHEBI:58937"/>
    </ligand>
</feature>
<feature type="binding site" evidence="1">
    <location>
        <position position="146"/>
    </location>
    <ligand>
        <name>Mg(2+)</name>
        <dbReference type="ChEBI" id="CHEBI:18420"/>
    </ligand>
</feature>
<feature type="binding site" evidence="1">
    <location>
        <begin position="147"/>
        <end position="148"/>
    </location>
    <ligand>
        <name>thiamine diphosphate</name>
        <dbReference type="ChEBI" id="CHEBI:58937"/>
    </ligand>
</feature>
<feature type="binding site" evidence="1">
    <location>
        <position position="175"/>
    </location>
    <ligand>
        <name>Mg(2+)</name>
        <dbReference type="ChEBI" id="CHEBI:18420"/>
    </ligand>
</feature>
<feature type="binding site" evidence="1">
    <location>
        <position position="175"/>
    </location>
    <ligand>
        <name>thiamine diphosphate</name>
        <dbReference type="ChEBI" id="CHEBI:58937"/>
    </ligand>
</feature>
<feature type="binding site" evidence="1">
    <location>
        <position position="370"/>
    </location>
    <ligand>
        <name>thiamine diphosphate</name>
        <dbReference type="ChEBI" id="CHEBI:58937"/>
    </ligand>
</feature>
<dbReference type="EC" id="2.2.1.7" evidence="1"/>
<dbReference type="EMBL" id="AM884176">
    <property type="protein sequence ID" value="CAP04025.1"/>
    <property type="molecule type" value="Genomic_DNA"/>
</dbReference>
<dbReference type="RefSeq" id="WP_009873732.1">
    <property type="nucleotide sequence ID" value="NC_010287.1"/>
</dbReference>
<dbReference type="RefSeq" id="YP_001654660.1">
    <property type="nucleotide sequence ID" value="NC_010287.1"/>
</dbReference>
<dbReference type="SMR" id="B0B7P9"/>
<dbReference type="KEGG" id="ctb:CTL0585"/>
<dbReference type="PATRIC" id="fig|471472.4.peg.630"/>
<dbReference type="HOGENOM" id="CLU_009227_1_4_0"/>
<dbReference type="UniPathway" id="UPA00064">
    <property type="reaction ID" value="UER00091"/>
</dbReference>
<dbReference type="Proteomes" id="UP001154402">
    <property type="component" value="Chromosome"/>
</dbReference>
<dbReference type="GO" id="GO:0005829">
    <property type="term" value="C:cytosol"/>
    <property type="evidence" value="ECO:0007669"/>
    <property type="project" value="TreeGrafter"/>
</dbReference>
<dbReference type="GO" id="GO:0008661">
    <property type="term" value="F:1-deoxy-D-xylulose-5-phosphate synthase activity"/>
    <property type="evidence" value="ECO:0007669"/>
    <property type="project" value="UniProtKB-UniRule"/>
</dbReference>
<dbReference type="GO" id="GO:0000287">
    <property type="term" value="F:magnesium ion binding"/>
    <property type="evidence" value="ECO:0007669"/>
    <property type="project" value="UniProtKB-UniRule"/>
</dbReference>
<dbReference type="GO" id="GO:0030976">
    <property type="term" value="F:thiamine pyrophosphate binding"/>
    <property type="evidence" value="ECO:0007669"/>
    <property type="project" value="UniProtKB-UniRule"/>
</dbReference>
<dbReference type="GO" id="GO:0052865">
    <property type="term" value="P:1-deoxy-D-xylulose 5-phosphate biosynthetic process"/>
    <property type="evidence" value="ECO:0007669"/>
    <property type="project" value="UniProtKB-UniPathway"/>
</dbReference>
<dbReference type="GO" id="GO:0019288">
    <property type="term" value="P:isopentenyl diphosphate biosynthetic process, methylerythritol 4-phosphate pathway"/>
    <property type="evidence" value="ECO:0007669"/>
    <property type="project" value="TreeGrafter"/>
</dbReference>
<dbReference type="GO" id="GO:0016114">
    <property type="term" value="P:terpenoid biosynthetic process"/>
    <property type="evidence" value="ECO:0007669"/>
    <property type="project" value="UniProtKB-UniRule"/>
</dbReference>
<dbReference type="GO" id="GO:0009228">
    <property type="term" value="P:thiamine biosynthetic process"/>
    <property type="evidence" value="ECO:0007669"/>
    <property type="project" value="UniProtKB-UniRule"/>
</dbReference>
<dbReference type="CDD" id="cd02007">
    <property type="entry name" value="TPP_DXS"/>
    <property type="match status" value="1"/>
</dbReference>
<dbReference type="CDD" id="cd07033">
    <property type="entry name" value="TPP_PYR_DXS_TK_like"/>
    <property type="match status" value="1"/>
</dbReference>
<dbReference type="FunFam" id="3.40.50.920:FF:000002">
    <property type="entry name" value="1-deoxy-D-xylulose-5-phosphate synthase"/>
    <property type="match status" value="1"/>
</dbReference>
<dbReference type="FunFam" id="3.40.50.970:FF:000104">
    <property type="entry name" value="1-deoxy-D-xylulose-5-phosphate synthase"/>
    <property type="match status" value="1"/>
</dbReference>
<dbReference type="Gene3D" id="3.40.50.920">
    <property type="match status" value="1"/>
</dbReference>
<dbReference type="Gene3D" id="3.40.50.970">
    <property type="match status" value="2"/>
</dbReference>
<dbReference type="HAMAP" id="MF_00315">
    <property type="entry name" value="DXP_synth"/>
    <property type="match status" value="1"/>
</dbReference>
<dbReference type="InterPro" id="IPR005477">
    <property type="entry name" value="Dxylulose-5-P_synthase"/>
</dbReference>
<dbReference type="InterPro" id="IPR029061">
    <property type="entry name" value="THDP-binding"/>
</dbReference>
<dbReference type="InterPro" id="IPR009014">
    <property type="entry name" value="Transketo_C/PFOR_II"/>
</dbReference>
<dbReference type="InterPro" id="IPR005475">
    <property type="entry name" value="Transketolase-like_Pyr-bd"/>
</dbReference>
<dbReference type="InterPro" id="IPR033248">
    <property type="entry name" value="Transketolase_C"/>
</dbReference>
<dbReference type="InterPro" id="IPR049557">
    <property type="entry name" value="Transketolase_CS"/>
</dbReference>
<dbReference type="NCBIfam" id="TIGR00204">
    <property type="entry name" value="dxs"/>
    <property type="match status" value="1"/>
</dbReference>
<dbReference type="NCBIfam" id="NF003933">
    <property type="entry name" value="PRK05444.2-2"/>
    <property type="match status" value="1"/>
</dbReference>
<dbReference type="PANTHER" id="PTHR43322">
    <property type="entry name" value="1-D-DEOXYXYLULOSE 5-PHOSPHATE SYNTHASE-RELATED"/>
    <property type="match status" value="1"/>
</dbReference>
<dbReference type="PANTHER" id="PTHR43322:SF5">
    <property type="entry name" value="1-DEOXY-D-XYLULOSE-5-PHOSPHATE SYNTHASE, CHLOROPLASTIC"/>
    <property type="match status" value="1"/>
</dbReference>
<dbReference type="Pfam" id="PF13292">
    <property type="entry name" value="DXP_synthase_N"/>
    <property type="match status" value="1"/>
</dbReference>
<dbReference type="Pfam" id="PF02779">
    <property type="entry name" value="Transket_pyr"/>
    <property type="match status" value="1"/>
</dbReference>
<dbReference type="Pfam" id="PF02780">
    <property type="entry name" value="Transketolase_C"/>
    <property type="match status" value="1"/>
</dbReference>
<dbReference type="SMART" id="SM00861">
    <property type="entry name" value="Transket_pyr"/>
    <property type="match status" value="1"/>
</dbReference>
<dbReference type="SUPFAM" id="SSF52518">
    <property type="entry name" value="Thiamin diphosphate-binding fold (THDP-binding)"/>
    <property type="match status" value="2"/>
</dbReference>
<dbReference type="SUPFAM" id="SSF52922">
    <property type="entry name" value="TK C-terminal domain-like"/>
    <property type="match status" value="1"/>
</dbReference>
<dbReference type="PROSITE" id="PS00801">
    <property type="entry name" value="TRANSKETOLASE_1"/>
    <property type="match status" value="1"/>
</dbReference>
<sequence length="640" mass="70668">MTYSLLPHIHSPQDLHALSLDKLPVLCDEIRNKIIESLSLTGGHLASNLGGVELTVALHYVFSSPDDQFIFDVGHQSYVHKLLTGRNTEAFSNIRHDNGLSGFTTPQESNHDIFFSGHAGNALSLALGLAKGSSNSSSHILPILGDAAFSCGLTLEALNNIPADLSKFIIVLNDNQMSISENVGNIPQGISQWIYPQKISKLSQKIHSWIQNLPSFLHKKKTLSHKVDIALKSLSHPLFEQFGLHYVGPIDGHNVKKLVQALQMIKDQPQPILFHVCTVKGNGLTEAERDPIRYHGVKAHFQNTSLKKTSGNVELQTPISFPQHAGNILCRLGKKYPQLQVVTPAMSLGSCLEDFRKQFPDRFTDVGIAEGHAVTFSAGIARSGTPVCCSIYSTFLHRAMDNVFHDVCMQELPVIFAIDRAGLAFHDGRSHHGIYDLGFLCSMPNMVICQPRNALVLERLFFSSLLWKSPCAIRYPNIPANEKASNSSFPFSPILPGEAEILCQGDDLLLIALGHMCNTALTVKEHLLDYGISTTVVDPIFIKPLDRKLLQSLLTHHSKVIILEEHSIHGGLGSEFLLFLNQHNIKADVLSLGVPDMFIPHGNPETILNLIGLTSDHITQRILSHFKFSTPIPIERFFKA</sequence>
<keyword id="KW-0414">Isoprene biosynthesis</keyword>
<keyword id="KW-0460">Magnesium</keyword>
<keyword id="KW-0479">Metal-binding</keyword>
<keyword id="KW-0784">Thiamine biosynthesis</keyword>
<keyword id="KW-0786">Thiamine pyrophosphate</keyword>
<keyword id="KW-0808">Transferase</keyword>
<name>DXS_CHLT2</name>
<comment type="function">
    <text evidence="1">Catalyzes the acyloin condensation reaction between C atoms 2 and 3 of pyruvate and glyceraldehyde 3-phosphate to yield 1-deoxy-D-xylulose-5-phosphate (DXP).</text>
</comment>
<comment type="catalytic activity">
    <reaction evidence="1">
        <text>D-glyceraldehyde 3-phosphate + pyruvate + H(+) = 1-deoxy-D-xylulose 5-phosphate + CO2</text>
        <dbReference type="Rhea" id="RHEA:12605"/>
        <dbReference type="ChEBI" id="CHEBI:15361"/>
        <dbReference type="ChEBI" id="CHEBI:15378"/>
        <dbReference type="ChEBI" id="CHEBI:16526"/>
        <dbReference type="ChEBI" id="CHEBI:57792"/>
        <dbReference type="ChEBI" id="CHEBI:59776"/>
        <dbReference type="EC" id="2.2.1.7"/>
    </reaction>
</comment>
<comment type="cofactor">
    <cofactor evidence="1">
        <name>Mg(2+)</name>
        <dbReference type="ChEBI" id="CHEBI:18420"/>
    </cofactor>
    <text evidence="1">Binds 1 Mg(2+) ion per subunit.</text>
</comment>
<comment type="cofactor">
    <cofactor evidence="1">
        <name>thiamine diphosphate</name>
        <dbReference type="ChEBI" id="CHEBI:58937"/>
    </cofactor>
    <text evidence="1">Binds 1 thiamine pyrophosphate per subunit.</text>
</comment>
<comment type="pathway">
    <text evidence="1">Metabolic intermediate biosynthesis; 1-deoxy-D-xylulose 5-phosphate biosynthesis; 1-deoxy-D-xylulose 5-phosphate from D-glyceraldehyde 3-phosphate and pyruvate: step 1/1.</text>
</comment>
<comment type="subunit">
    <text evidence="1">Homodimer.</text>
</comment>
<comment type="similarity">
    <text evidence="1">Belongs to the transketolase family. DXPS subfamily.</text>
</comment>